<organism>
    <name type="scientific">Escherichia coli (strain K12 / MC4100 / BW2952)</name>
    <dbReference type="NCBI Taxonomy" id="595496"/>
    <lineage>
        <taxon>Bacteria</taxon>
        <taxon>Pseudomonadati</taxon>
        <taxon>Pseudomonadota</taxon>
        <taxon>Gammaproteobacteria</taxon>
        <taxon>Enterobacterales</taxon>
        <taxon>Enterobacteriaceae</taxon>
        <taxon>Escherichia</taxon>
    </lineage>
</organism>
<dbReference type="EC" id="2.1.3.-" evidence="1"/>
<dbReference type="EMBL" id="CP001396">
    <property type="protein sequence ID" value="ACR64667.1"/>
    <property type="molecule type" value="Genomic_DNA"/>
</dbReference>
<dbReference type="RefSeq" id="WP_000019590.1">
    <property type="nucleotide sequence ID" value="NC_012759.1"/>
</dbReference>
<dbReference type="SMR" id="C4ZQF4"/>
<dbReference type="KEGG" id="ebw:BWG_1684"/>
<dbReference type="HOGENOM" id="CLU_078475_0_0_6"/>
<dbReference type="GO" id="GO:0016743">
    <property type="term" value="F:carboxyl- or carbamoyltransferase activity"/>
    <property type="evidence" value="ECO:0007669"/>
    <property type="project" value="UniProtKB-UniRule"/>
</dbReference>
<dbReference type="GO" id="GO:1904047">
    <property type="term" value="F:S-adenosyl-L-methionine binding"/>
    <property type="evidence" value="ECO:0007669"/>
    <property type="project" value="UniProtKB-UniRule"/>
</dbReference>
<dbReference type="GO" id="GO:0002098">
    <property type="term" value="P:tRNA wobble uridine modification"/>
    <property type="evidence" value="ECO:0007669"/>
    <property type="project" value="InterPro"/>
</dbReference>
<dbReference type="CDD" id="cd02440">
    <property type="entry name" value="AdoMet_MTases"/>
    <property type="match status" value="1"/>
</dbReference>
<dbReference type="FunFam" id="3.40.50.150:FF:000030">
    <property type="entry name" value="Carboxy-S-adenosyl-L-methionine synthase"/>
    <property type="match status" value="1"/>
</dbReference>
<dbReference type="Gene3D" id="3.40.50.150">
    <property type="entry name" value="Vaccinia Virus protein VP39"/>
    <property type="match status" value="1"/>
</dbReference>
<dbReference type="HAMAP" id="MF_01589">
    <property type="entry name" value="Cx_SAM_synthase"/>
    <property type="match status" value="1"/>
</dbReference>
<dbReference type="InterPro" id="IPR005271">
    <property type="entry name" value="CmoA"/>
</dbReference>
<dbReference type="InterPro" id="IPR041698">
    <property type="entry name" value="Methyltransf_25"/>
</dbReference>
<dbReference type="InterPro" id="IPR029063">
    <property type="entry name" value="SAM-dependent_MTases_sf"/>
</dbReference>
<dbReference type="NCBIfam" id="TIGR00740">
    <property type="entry name" value="carboxy-S-adenosyl-L-methionine synthase CmoA"/>
    <property type="match status" value="1"/>
</dbReference>
<dbReference type="NCBIfam" id="NF011995">
    <property type="entry name" value="PRK15451.1"/>
    <property type="match status" value="1"/>
</dbReference>
<dbReference type="PANTHER" id="PTHR43861:SF2">
    <property type="entry name" value="CARBOXY-S-ADENOSYL-L-METHIONINE SYNTHASE"/>
    <property type="match status" value="1"/>
</dbReference>
<dbReference type="PANTHER" id="PTHR43861">
    <property type="entry name" value="TRANS-ACONITATE 2-METHYLTRANSFERASE-RELATED"/>
    <property type="match status" value="1"/>
</dbReference>
<dbReference type="Pfam" id="PF13649">
    <property type="entry name" value="Methyltransf_25"/>
    <property type="match status" value="1"/>
</dbReference>
<dbReference type="PIRSF" id="PIRSF006325">
    <property type="entry name" value="MeTrfase_bac"/>
    <property type="match status" value="1"/>
</dbReference>
<dbReference type="SUPFAM" id="SSF53335">
    <property type="entry name" value="S-adenosyl-L-methionine-dependent methyltransferases"/>
    <property type="match status" value="1"/>
</dbReference>
<comment type="function">
    <text evidence="1">Catalyzes the conversion of S-adenosyl-L-methionine (SAM) to carboxy-S-adenosyl-L-methionine (Cx-SAM).</text>
</comment>
<comment type="catalytic activity">
    <reaction evidence="1">
        <text>prephenate + S-adenosyl-L-methionine = carboxy-S-adenosyl-L-methionine + 3-phenylpyruvate + H2O</text>
        <dbReference type="Rhea" id="RHEA:51692"/>
        <dbReference type="ChEBI" id="CHEBI:15377"/>
        <dbReference type="ChEBI" id="CHEBI:18005"/>
        <dbReference type="ChEBI" id="CHEBI:29934"/>
        <dbReference type="ChEBI" id="CHEBI:59789"/>
        <dbReference type="ChEBI" id="CHEBI:134278"/>
    </reaction>
</comment>
<comment type="subunit">
    <text evidence="1">Homodimer.</text>
</comment>
<comment type="similarity">
    <text evidence="1">Belongs to the class I-like SAM-binding methyltransferase superfamily. Cx-SAM synthase family.</text>
</comment>
<name>CMOA_ECOBW</name>
<feature type="chain" id="PRO_1000215636" description="Carboxy-S-adenosyl-L-methionine synthase">
    <location>
        <begin position="1"/>
        <end position="247"/>
    </location>
</feature>
<feature type="binding site" evidence="1">
    <location>
        <position position="39"/>
    </location>
    <ligand>
        <name>S-adenosyl-L-methionine</name>
        <dbReference type="ChEBI" id="CHEBI:59789"/>
    </ligand>
</feature>
<feature type="binding site" evidence="1">
    <location>
        <begin position="64"/>
        <end position="66"/>
    </location>
    <ligand>
        <name>S-adenosyl-L-methionine</name>
        <dbReference type="ChEBI" id="CHEBI:59789"/>
    </ligand>
</feature>
<feature type="binding site" evidence="1">
    <location>
        <begin position="89"/>
        <end position="90"/>
    </location>
    <ligand>
        <name>S-adenosyl-L-methionine</name>
        <dbReference type="ChEBI" id="CHEBI:59789"/>
    </ligand>
</feature>
<feature type="binding site" evidence="1">
    <location>
        <begin position="117"/>
        <end position="118"/>
    </location>
    <ligand>
        <name>S-adenosyl-L-methionine</name>
        <dbReference type="ChEBI" id="CHEBI:59789"/>
    </ligand>
</feature>
<feature type="binding site" evidence="1">
    <location>
        <position position="132"/>
    </location>
    <ligand>
        <name>S-adenosyl-L-methionine</name>
        <dbReference type="ChEBI" id="CHEBI:59789"/>
    </ligand>
</feature>
<feature type="binding site" evidence="1">
    <location>
        <position position="199"/>
    </location>
    <ligand>
        <name>S-adenosyl-L-methionine</name>
        <dbReference type="ChEBI" id="CHEBI:59789"/>
    </ligand>
</feature>
<accession>C4ZQF4</accession>
<proteinExistence type="inferred from homology"/>
<evidence type="ECO:0000255" key="1">
    <source>
        <dbReference type="HAMAP-Rule" id="MF_01589"/>
    </source>
</evidence>
<sequence length="247" mass="27777">MSHRDTLFSAPIARLGDWTFDERVAEVFPDMIQRSVPGYSNIISMIGMLAERFVQPGTQVYDLGCSLGAATLSVRRNIHHDNCKIIAIDNSPAMIERCRRHIDAYKAPTPVDVIEGDIRDIAIENASMVVLNFTLQFLEPSERQALLDKIYQGLNPGGALVLSEKFSFEDAKVGELLFNMHHDFKRANGYSELEISQKRSMLENVMLTDSVETHKARLHNAGFEHSELWFQCFNFGSLVALKAEDAA</sequence>
<gene>
    <name evidence="1" type="primary">cmoA</name>
    <name type="ordered locus">BWG_1684</name>
</gene>
<keyword id="KW-0949">S-adenosyl-L-methionine</keyword>
<keyword id="KW-0808">Transferase</keyword>
<protein>
    <recommendedName>
        <fullName evidence="1">Carboxy-S-adenosyl-L-methionine synthase</fullName>
        <shortName evidence="1">Cx-SAM synthase</shortName>
        <ecNumber evidence="1">2.1.3.-</ecNumber>
    </recommendedName>
</protein>
<reference key="1">
    <citation type="journal article" date="2009" name="J. Bacteriol.">
        <title>Genomic sequencing reveals regulatory mutations and recombinational events in the widely used MC4100 lineage of Escherichia coli K-12.</title>
        <authorList>
            <person name="Ferenci T."/>
            <person name="Zhou Z."/>
            <person name="Betteridge T."/>
            <person name="Ren Y."/>
            <person name="Liu Y."/>
            <person name="Feng L."/>
            <person name="Reeves P.R."/>
            <person name="Wang L."/>
        </authorList>
    </citation>
    <scope>NUCLEOTIDE SEQUENCE [LARGE SCALE GENOMIC DNA]</scope>
    <source>
        <strain>K12 / MC4100 / BW2952</strain>
    </source>
</reference>